<organism>
    <name type="scientific">Mus musculus</name>
    <name type="common">Mouse</name>
    <dbReference type="NCBI Taxonomy" id="10090"/>
    <lineage>
        <taxon>Eukaryota</taxon>
        <taxon>Metazoa</taxon>
        <taxon>Chordata</taxon>
        <taxon>Craniata</taxon>
        <taxon>Vertebrata</taxon>
        <taxon>Euteleostomi</taxon>
        <taxon>Mammalia</taxon>
        <taxon>Eutheria</taxon>
        <taxon>Euarchontoglires</taxon>
        <taxon>Glires</taxon>
        <taxon>Rodentia</taxon>
        <taxon>Myomorpha</taxon>
        <taxon>Muroidea</taxon>
        <taxon>Muridae</taxon>
        <taxon>Murinae</taxon>
        <taxon>Mus</taxon>
        <taxon>Mus</taxon>
    </lineage>
</organism>
<gene>
    <name type="primary">Senp8</name>
    <name type="synonym">Den1</name>
    <name type="synonym">Nedp1</name>
</gene>
<name>SENP8_MOUSE</name>
<feature type="chain" id="PRO_0000101728" description="Sentrin-specific protease 8">
    <location>
        <begin position="1"/>
        <end position="221"/>
    </location>
</feature>
<feature type="region of interest" description="Protease">
    <location>
        <begin position="11"/>
        <end position="174"/>
    </location>
</feature>
<feature type="active site" evidence="1">
    <location>
        <position position="102"/>
    </location>
</feature>
<feature type="active site" evidence="1">
    <location>
        <position position="119"/>
    </location>
</feature>
<feature type="active site" description="Nucleophile" evidence="1">
    <location>
        <position position="163"/>
    </location>
</feature>
<feature type="modified residue" description="N-acetylmethionine" evidence="2">
    <location>
        <position position="1"/>
    </location>
</feature>
<sequence>MDPVVLSYMDSLLRQSDVSLLDPPSWLNDHIIGFAFEYFANSQFHDCSDHVCFISPEVTQFIKCTSSPAEIAMFLEPLDLPHKRVVFLAINDNSNQAAGGTHWSLLVYLQDKNSFFHYDSHSRSNSIHAKQVAEKLKAFLGSKGDKLVFVEEKAPAQENSYDCGMYVICNTEALCQSLFRRQPESPLQLLTPTYITKKRGEWKDLIARLAKKNEVATEECS</sequence>
<accession>Q9D2Z4</accession>
<accession>Q543P0</accession>
<reference key="1">
    <citation type="journal article" date="2005" name="Science">
        <title>The transcriptional landscape of the mammalian genome.</title>
        <authorList>
            <person name="Carninci P."/>
            <person name="Kasukawa T."/>
            <person name="Katayama S."/>
            <person name="Gough J."/>
            <person name="Frith M.C."/>
            <person name="Maeda N."/>
            <person name="Oyama R."/>
            <person name="Ravasi T."/>
            <person name="Lenhard B."/>
            <person name="Wells C."/>
            <person name="Kodzius R."/>
            <person name="Shimokawa K."/>
            <person name="Bajic V.B."/>
            <person name="Brenner S.E."/>
            <person name="Batalov S."/>
            <person name="Forrest A.R."/>
            <person name="Zavolan M."/>
            <person name="Davis M.J."/>
            <person name="Wilming L.G."/>
            <person name="Aidinis V."/>
            <person name="Allen J.E."/>
            <person name="Ambesi-Impiombato A."/>
            <person name="Apweiler R."/>
            <person name="Aturaliya R.N."/>
            <person name="Bailey T.L."/>
            <person name="Bansal M."/>
            <person name="Baxter L."/>
            <person name="Beisel K.W."/>
            <person name="Bersano T."/>
            <person name="Bono H."/>
            <person name="Chalk A.M."/>
            <person name="Chiu K.P."/>
            <person name="Choudhary V."/>
            <person name="Christoffels A."/>
            <person name="Clutterbuck D.R."/>
            <person name="Crowe M.L."/>
            <person name="Dalla E."/>
            <person name="Dalrymple B.P."/>
            <person name="de Bono B."/>
            <person name="Della Gatta G."/>
            <person name="di Bernardo D."/>
            <person name="Down T."/>
            <person name="Engstrom P."/>
            <person name="Fagiolini M."/>
            <person name="Faulkner G."/>
            <person name="Fletcher C.F."/>
            <person name="Fukushima T."/>
            <person name="Furuno M."/>
            <person name="Futaki S."/>
            <person name="Gariboldi M."/>
            <person name="Georgii-Hemming P."/>
            <person name="Gingeras T.R."/>
            <person name="Gojobori T."/>
            <person name="Green R.E."/>
            <person name="Gustincich S."/>
            <person name="Harbers M."/>
            <person name="Hayashi Y."/>
            <person name="Hensch T.K."/>
            <person name="Hirokawa N."/>
            <person name="Hill D."/>
            <person name="Huminiecki L."/>
            <person name="Iacono M."/>
            <person name="Ikeo K."/>
            <person name="Iwama A."/>
            <person name="Ishikawa T."/>
            <person name="Jakt M."/>
            <person name="Kanapin A."/>
            <person name="Katoh M."/>
            <person name="Kawasawa Y."/>
            <person name="Kelso J."/>
            <person name="Kitamura H."/>
            <person name="Kitano H."/>
            <person name="Kollias G."/>
            <person name="Krishnan S.P."/>
            <person name="Kruger A."/>
            <person name="Kummerfeld S.K."/>
            <person name="Kurochkin I.V."/>
            <person name="Lareau L.F."/>
            <person name="Lazarevic D."/>
            <person name="Lipovich L."/>
            <person name="Liu J."/>
            <person name="Liuni S."/>
            <person name="McWilliam S."/>
            <person name="Madan Babu M."/>
            <person name="Madera M."/>
            <person name="Marchionni L."/>
            <person name="Matsuda H."/>
            <person name="Matsuzawa S."/>
            <person name="Miki H."/>
            <person name="Mignone F."/>
            <person name="Miyake S."/>
            <person name="Morris K."/>
            <person name="Mottagui-Tabar S."/>
            <person name="Mulder N."/>
            <person name="Nakano N."/>
            <person name="Nakauchi H."/>
            <person name="Ng P."/>
            <person name="Nilsson R."/>
            <person name="Nishiguchi S."/>
            <person name="Nishikawa S."/>
            <person name="Nori F."/>
            <person name="Ohara O."/>
            <person name="Okazaki Y."/>
            <person name="Orlando V."/>
            <person name="Pang K.C."/>
            <person name="Pavan W.J."/>
            <person name="Pavesi G."/>
            <person name="Pesole G."/>
            <person name="Petrovsky N."/>
            <person name="Piazza S."/>
            <person name="Reed J."/>
            <person name="Reid J.F."/>
            <person name="Ring B.Z."/>
            <person name="Ringwald M."/>
            <person name="Rost B."/>
            <person name="Ruan Y."/>
            <person name="Salzberg S.L."/>
            <person name="Sandelin A."/>
            <person name="Schneider C."/>
            <person name="Schoenbach C."/>
            <person name="Sekiguchi K."/>
            <person name="Semple C.A."/>
            <person name="Seno S."/>
            <person name="Sessa L."/>
            <person name="Sheng Y."/>
            <person name="Shibata Y."/>
            <person name="Shimada H."/>
            <person name="Shimada K."/>
            <person name="Silva D."/>
            <person name="Sinclair B."/>
            <person name="Sperling S."/>
            <person name="Stupka E."/>
            <person name="Sugiura K."/>
            <person name="Sultana R."/>
            <person name="Takenaka Y."/>
            <person name="Taki K."/>
            <person name="Tammoja K."/>
            <person name="Tan S.L."/>
            <person name="Tang S."/>
            <person name="Taylor M.S."/>
            <person name="Tegner J."/>
            <person name="Teichmann S.A."/>
            <person name="Ueda H.R."/>
            <person name="van Nimwegen E."/>
            <person name="Verardo R."/>
            <person name="Wei C.L."/>
            <person name="Yagi K."/>
            <person name="Yamanishi H."/>
            <person name="Zabarovsky E."/>
            <person name="Zhu S."/>
            <person name="Zimmer A."/>
            <person name="Hide W."/>
            <person name="Bult C."/>
            <person name="Grimmond S.M."/>
            <person name="Teasdale R.D."/>
            <person name="Liu E.T."/>
            <person name="Brusic V."/>
            <person name="Quackenbush J."/>
            <person name="Wahlestedt C."/>
            <person name="Mattick J.S."/>
            <person name="Hume D.A."/>
            <person name="Kai C."/>
            <person name="Sasaki D."/>
            <person name="Tomaru Y."/>
            <person name="Fukuda S."/>
            <person name="Kanamori-Katayama M."/>
            <person name="Suzuki M."/>
            <person name="Aoki J."/>
            <person name="Arakawa T."/>
            <person name="Iida J."/>
            <person name="Imamura K."/>
            <person name="Itoh M."/>
            <person name="Kato T."/>
            <person name="Kawaji H."/>
            <person name="Kawagashira N."/>
            <person name="Kawashima T."/>
            <person name="Kojima M."/>
            <person name="Kondo S."/>
            <person name="Konno H."/>
            <person name="Nakano K."/>
            <person name="Ninomiya N."/>
            <person name="Nishio T."/>
            <person name="Okada M."/>
            <person name="Plessy C."/>
            <person name="Shibata K."/>
            <person name="Shiraki T."/>
            <person name="Suzuki S."/>
            <person name="Tagami M."/>
            <person name="Waki K."/>
            <person name="Watahiki A."/>
            <person name="Okamura-Oho Y."/>
            <person name="Suzuki H."/>
            <person name="Kawai J."/>
            <person name="Hayashizaki Y."/>
        </authorList>
    </citation>
    <scope>NUCLEOTIDE SEQUENCE [LARGE SCALE MRNA]</scope>
    <source>
        <strain>C57BL/6J</strain>
        <tissue>Cecum</tissue>
    </source>
</reference>
<reference key="2">
    <citation type="journal article" date="2004" name="Genome Res.">
        <title>The status, quality, and expansion of the NIH full-length cDNA project: the Mammalian Gene Collection (MGC).</title>
        <authorList>
            <consortium name="The MGC Project Team"/>
        </authorList>
    </citation>
    <scope>NUCLEOTIDE SEQUENCE [LARGE SCALE MRNA]</scope>
    <source>
        <strain>FVB/N</strain>
        <tissue>Mammary gland</tissue>
    </source>
</reference>
<reference key="3">
    <citation type="journal article" date="2003" name="J. Biol. Chem.">
        <title>Identification and characterization of DEN1, a deneddylase of the ULP family.</title>
        <authorList>
            <person name="Gan-Erdene T."/>
            <person name="Nagamalleswari K."/>
            <person name="Yin L."/>
            <person name="Wu K."/>
            <person name="Pan Z.-Q."/>
            <person name="Wilkinson K.D."/>
        </authorList>
    </citation>
    <scope>IDENTIFICATION BY MASS SPECTROMETRY</scope>
    <scope>FUNCTION</scope>
</reference>
<reference key="4">
    <citation type="journal article" date="2004" name="Mol. Cell. Biol.">
        <title>Specific and covalent targeting of conjugating and deconjugating enzymes of ubiquitin-like proteins.</title>
        <authorList>
            <person name="Hemelaar J."/>
            <person name="Borodovsky A."/>
            <person name="Kessler B.M."/>
            <person name="Reverter D."/>
            <person name="Cook J."/>
            <person name="Kolli N."/>
            <person name="Gan-Erdene T."/>
            <person name="Wilkinson K.D."/>
            <person name="Gill G."/>
            <person name="Lima C.D."/>
            <person name="Ploegh H.L."/>
            <person name="Ovaa H."/>
        </authorList>
    </citation>
    <scope>IDENTIFICATION BY MASS SPECTROMETRY</scope>
</reference>
<dbReference type="EC" id="3.4.22.-"/>
<dbReference type="EMBL" id="AK018606">
    <property type="protein sequence ID" value="BAB31304.1"/>
    <property type="status" value="ALT_INIT"/>
    <property type="molecule type" value="mRNA"/>
</dbReference>
<dbReference type="EMBL" id="AK049120">
    <property type="protein sequence ID" value="BAC33554.1"/>
    <property type="molecule type" value="mRNA"/>
</dbReference>
<dbReference type="EMBL" id="BC037443">
    <property type="protein sequence ID" value="AAH37443.1"/>
    <property type="molecule type" value="mRNA"/>
</dbReference>
<dbReference type="CCDS" id="CCDS23254.1"/>
<dbReference type="RefSeq" id="NP_001165539.1">
    <property type="nucleotide sequence ID" value="NM_001172068.1"/>
</dbReference>
<dbReference type="RefSeq" id="NP_001165540.1">
    <property type="nucleotide sequence ID" value="NM_001172069.1"/>
</dbReference>
<dbReference type="RefSeq" id="NP_001165541.1">
    <property type="nucleotide sequence ID" value="NM_001172070.1"/>
</dbReference>
<dbReference type="RefSeq" id="NP_001165542.1">
    <property type="nucleotide sequence ID" value="NM_001172071.1"/>
</dbReference>
<dbReference type="RefSeq" id="NP_082114.1">
    <property type="nucleotide sequence ID" value="NM_027838.3"/>
</dbReference>
<dbReference type="SMR" id="Q9D2Z4"/>
<dbReference type="BioGRID" id="214805">
    <property type="interactions" value="2"/>
</dbReference>
<dbReference type="FunCoup" id="Q9D2Z4">
    <property type="interactions" value="610"/>
</dbReference>
<dbReference type="STRING" id="10090.ENSMUSP00000149463"/>
<dbReference type="MEROPS" id="C48.011"/>
<dbReference type="PhosphoSitePlus" id="Q9D2Z4"/>
<dbReference type="PaxDb" id="10090-ENSMUSP00000129441"/>
<dbReference type="ProteomicsDB" id="256961"/>
<dbReference type="Pumba" id="Q9D2Z4"/>
<dbReference type="Antibodypedia" id="26582">
    <property type="antibodies" value="292 antibodies from 29 providers"/>
</dbReference>
<dbReference type="DNASU" id="71599"/>
<dbReference type="Ensembl" id="ENSMUST00000051039.5">
    <property type="protein sequence ID" value="ENSMUSP00000054509.5"/>
    <property type="gene ID" value="ENSMUSG00000051705.14"/>
</dbReference>
<dbReference type="Ensembl" id="ENSMUST00000163586.9">
    <property type="protein sequence ID" value="ENSMUSP00000129441.3"/>
    <property type="gene ID" value="ENSMUSG00000051705.14"/>
</dbReference>
<dbReference type="Ensembl" id="ENSMUST00000177963.8">
    <property type="protein sequence ID" value="ENSMUSP00000137228.2"/>
    <property type="gene ID" value="ENSMUSG00000051705.14"/>
</dbReference>
<dbReference type="Ensembl" id="ENSMUST00000217093.2">
    <property type="protein sequence ID" value="ENSMUSP00000150601.2"/>
    <property type="gene ID" value="ENSMUSG00000051705.14"/>
</dbReference>
<dbReference type="GeneID" id="71599"/>
<dbReference type="KEGG" id="mmu:71599"/>
<dbReference type="UCSC" id="uc009pym.2">
    <property type="organism name" value="mouse"/>
</dbReference>
<dbReference type="AGR" id="MGI:1918849"/>
<dbReference type="CTD" id="123228"/>
<dbReference type="MGI" id="MGI:1918849">
    <property type="gene designation" value="Senp8"/>
</dbReference>
<dbReference type="VEuPathDB" id="HostDB:ENSMUSG00000051705"/>
<dbReference type="eggNOG" id="KOG3246">
    <property type="taxonomic scope" value="Eukaryota"/>
</dbReference>
<dbReference type="GeneTree" id="ENSGT00390000014038"/>
<dbReference type="HOGENOM" id="CLU_043678_3_1_1"/>
<dbReference type="InParanoid" id="Q9D2Z4"/>
<dbReference type="OMA" id="GFYFEYL"/>
<dbReference type="OrthoDB" id="5065855at2759"/>
<dbReference type="PhylomeDB" id="Q9D2Z4"/>
<dbReference type="TreeFam" id="TF351057"/>
<dbReference type="Reactome" id="R-MMU-5689603">
    <property type="pathway name" value="UCH proteinases"/>
</dbReference>
<dbReference type="Reactome" id="R-MMU-8951664">
    <property type="pathway name" value="Neddylation"/>
</dbReference>
<dbReference type="BioGRID-ORCS" id="71599">
    <property type="hits" value="8 hits in 75 CRISPR screens"/>
</dbReference>
<dbReference type="PRO" id="PR:Q9D2Z4"/>
<dbReference type="Proteomes" id="UP000000589">
    <property type="component" value="Chromosome 9"/>
</dbReference>
<dbReference type="RNAct" id="Q9D2Z4">
    <property type="molecule type" value="protein"/>
</dbReference>
<dbReference type="Bgee" id="ENSMUSG00000051705">
    <property type="expression patterns" value="Expressed in secondary oocyte and 221 other cell types or tissues"/>
</dbReference>
<dbReference type="ExpressionAtlas" id="Q9D2Z4">
    <property type="expression patterns" value="baseline and differential"/>
</dbReference>
<dbReference type="GO" id="GO:0008234">
    <property type="term" value="F:cysteine-type peptidase activity"/>
    <property type="evidence" value="ECO:0000266"/>
    <property type="project" value="MGI"/>
</dbReference>
<dbReference type="GO" id="GO:0019784">
    <property type="term" value="F:deNEDDylase activity"/>
    <property type="evidence" value="ECO:0000266"/>
    <property type="project" value="MGI"/>
</dbReference>
<dbReference type="GO" id="GO:0006508">
    <property type="term" value="P:proteolysis"/>
    <property type="evidence" value="ECO:0007669"/>
    <property type="project" value="UniProtKB-KW"/>
</dbReference>
<dbReference type="FunFam" id="3.40.395.10:FF:000003">
    <property type="entry name" value="Sentrin-specific protease 8"/>
    <property type="match status" value="1"/>
</dbReference>
<dbReference type="Gene3D" id="3.40.395.10">
    <property type="entry name" value="Adenoviral Proteinase, Chain A"/>
    <property type="match status" value="1"/>
</dbReference>
<dbReference type="InterPro" id="IPR044613">
    <property type="entry name" value="Nep1/2-like"/>
</dbReference>
<dbReference type="InterPro" id="IPR038765">
    <property type="entry name" value="Papain-like_cys_pep_sf"/>
</dbReference>
<dbReference type="InterPro" id="IPR003653">
    <property type="entry name" value="Peptidase_C48_C"/>
</dbReference>
<dbReference type="PANTHER" id="PTHR46468">
    <property type="entry name" value="SENTRIN-SPECIFIC PROTEASE 8"/>
    <property type="match status" value="1"/>
</dbReference>
<dbReference type="PANTHER" id="PTHR46468:SF1">
    <property type="entry name" value="SENTRIN-SPECIFIC PROTEASE 8"/>
    <property type="match status" value="1"/>
</dbReference>
<dbReference type="Pfam" id="PF02902">
    <property type="entry name" value="Peptidase_C48"/>
    <property type="match status" value="1"/>
</dbReference>
<dbReference type="SUPFAM" id="SSF54001">
    <property type="entry name" value="Cysteine proteinases"/>
    <property type="match status" value="1"/>
</dbReference>
<dbReference type="PROSITE" id="PS50600">
    <property type="entry name" value="ULP_PROTEASE"/>
    <property type="match status" value="1"/>
</dbReference>
<comment type="function">
    <text evidence="3">Protease that catalyzes two essential functions in the NEDD8 pathway: processing of full-length NEDD8 to its mature form and deconjugation of NEDD8 from targeted proteins such as cullins or p53.</text>
</comment>
<comment type="similarity">
    <text evidence="4">Belongs to the peptidase C48 family.</text>
</comment>
<comment type="sequence caution" evidence="4">
    <conflict type="erroneous initiation">
        <sequence resource="EMBL-CDS" id="BAB31304"/>
    </conflict>
</comment>
<evidence type="ECO:0000250" key="1"/>
<evidence type="ECO:0000250" key="2">
    <source>
        <dbReference type="UniProtKB" id="Q96LD8"/>
    </source>
</evidence>
<evidence type="ECO:0000269" key="3">
    <source>
    </source>
</evidence>
<evidence type="ECO:0000305" key="4"/>
<protein>
    <recommendedName>
        <fullName>Sentrin-specific protease 8</fullName>
        <ecNumber>3.4.22.-</ecNumber>
    </recommendedName>
    <alternativeName>
        <fullName>Deneddylase-1</fullName>
    </alternativeName>
    <alternativeName>
        <fullName>NEDD8-specific protease 1</fullName>
    </alternativeName>
    <alternativeName>
        <fullName>Sentrin/SUMO-specific protease SENP8</fullName>
    </alternativeName>
</protein>
<keyword id="KW-0007">Acetylation</keyword>
<keyword id="KW-0378">Hydrolase</keyword>
<keyword id="KW-0645">Protease</keyword>
<keyword id="KW-1185">Reference proteome</keyword>
<keyword id="KW-0788">Thiol protease</keyword>
<keyword id="KW-0833">Ubl conjugation pathway</keyword>
<proteinExistence type="evidence at protein level"/>